<keyword id="KW-0249">Electron transport</keyword>
<keyword id="KW-0472">Membrane</keyword>
<keyword id="KW-0496">Mitochondrion</keyword>
<keyword id="KW-0999">Mitochondrion inner membrane</keyword>
<keyword id="KW-0520">NAD</keyword>
<keyword id="KW-1185">Reference proteome</keyword>
<keyword id="KW-0679">Respiratory chain</keyword>
<keyword id="KW-1278">Translocase</keyword>
<keyword id="KW-0812">Transmembrane</keyword>
<keyword id="KW-1133">Transmembrane helix</keyword>
<keyword id="KW-0813">Transport</keyword>
<keyword id="KW-0830">Ubiquinone</keyword>
<geneLocation type="mitochondrion"/>
<gene>
    <name type="primary">MT-ND4L</name>
    <name type="synonym">MTND4L</name>
    <name type="synonym">NADH4L</name>
    <name type="synonym">ND4L</name>
</gene>
<sequence>MSLVHMNILLAFTMSLTGLLMYRSHLMSALLCLEGMMLSLFILMTITILNMHFTLASMTPIILLVFAACEAAVGLALLVKISNTYGTDHVQNLNLLQC</sequence>
<dbReference type="EC" id="7.1.1.2"/>
<dbReference type="EMBL" id="AY789529">
    <property type="protein sequence ID" value="AAV49119.1"/>
    <property type="molecule type" value="Genomic_DNA"/>
</dbReference>
<dbReference type="RefSeq" id="YP_423957.1">
    <property type="nucleotide sequence ID" value="NC_007629.1"/>
</dbReference>
<dbReference type="SMR" id="Q2YG58"/>
<dbReference type="GeneID" id="3802088"/>
<dbReference type="KEGG" id="lve:3802088"/>
<dbReference type="CTD" id="4539"/>
<dbReference type="OrthoDB" id="14164at9721"/>
<dbReference type="Proteomes" id="UP000265300">
    <property type="component" value="Mitochondrion MT"/>
</dbReference>
<dbReference type="GO" id="GO:0005743">
    <property type="term" value="C:mitochondrial inner membrane"/>
    <property type="evidence" value="ECO:0000250"/>
    <property type="project" value="UniProtKB"/>
</dbReference>
<dbReference type="GO" id="GO:0045271">
    <property type="term" value="C:respiratory chain complex I"/>
    <property type="evidence" value="ECO:0000250"/>
    <property type="project" value="UniProtKB"/>
</dbReference>
<dbReference type="GO" id="GO:0008137">
    <property type="term" value="F:NADH dehydrogenase (ubiquinone) activity"/>
    <property type="evidence" value="ECO:0000250"/>
    <property type="project" value="UniProtKB"/>
</dbReference>
<dbReference type="GO" id="GO:0042773">
    <property type="term" value="P:ATP synthesis coupled electron transport"/>
    <property type="evidence" value="ECO:0007669"/>
    <property type="project" value="InterPro"/>
</dbReference>
<dbReference type="FunFam" id="1.10.287.3510:FF:000002">
    <property type="entry name" value="NADH-ubiquinone oxidoreductase chain 4L"/>
    <property type="match status" value="1"/>
</dbReference>
<dbReference type="Gene3D" id="1.10.287.3510">
    <property type="match status" value="1"/>
</dbReference>
<dbReference type="InterPro" id="IPR001133">
    <property type="entry name" value="NADH_UbQ_OxRdtase_chain4L/K"/>
</dbReference>
<dbReference type="InterPro" id="IPR039428">
    <property type="entry name" value="NUOK/Mnh_C1-like"/>
</dbReference>
<dbReference type="PANTHER" id="PTHR11434:SF0">
    <property type="entry name" value="NADH-UBIQUINONE OXIDOREDUCTASE CHAIN 4L"/>
    <property type="match status" value="1"/>
</dbReference>
<dbReference type="PANTHER" id="PTHR11434">
    <property type="entry name" value="NADH-UBIQUINONE OXIDOREDUCTASE SUBUNIT ND4L"/>
    <property type="match status" value="1"/>
</dbReference>
<dbReference type="Pfam" id="PF00420">
    <property type="entry name" value="Oxidored_q2"/>
    <property type="match status" value="1"/>
</dbReference>
<accession>Q2YG58</accession>
<comment type="function">
    <text evidence="1">Core subunit of the mitochondrial membrane respiratory chain NADH dehydrogenase (Complex I) which catalyzes electron transfer from NADH through the respiratory chain, using ubiquinone as an electron acceptor. Part of the enzyme membrane arm which is embedded in the lipid bilayer and involved in proton translocation.</text>
</comment>
<comment type="catalytic activity">
    <reaction evidence="1">
        <text>a ubiquinone + NADH + 5 H(+)(in) = a ubiquinol + NAD(+) + 4 H(+)(out)</text>
        <dbReference type="Rhea" id="RHEA:29091"/>
        <dbReference type="Rhea" id="RHEA-COMP:9565"/>
        <dbReference type="Rhea" id="RHEA-COMP:9566"/>
        <dbReference type="ChEBI" id="CHEBI:15378"/>
        <dbReference type="ChEBI" id="CHEBI:16389"/>
        <dbReference type="ChEBI" id="CHEBI:17976"/>
        <dbReference type="ChEBI" id="CHEBI:57540"/>
        <dbReference type="ChEBI" id="CHEBI:57945"/>
        <dbReference type="EC" id="7.1.1.2"/>
    </reaction>
    <physiologicalReaction direction="left-to-right" evidence="1">
        <dbReference type="Rhea" id="RHEA:29092"/>
    </physiologicalReaction>
</comment>
<comment type="subunit">
    <text evidence="2">Core subunit of respiratory chain NADH dehydrogenase (Complex I) which is composed of 45 different subunits.</text>
</comment>
<comment type="subcellular location">
    <subcellularLocation>
        <location evidence="2">Mitochondrion inner membrane</location>
        <topology evidence="3">Multi-pass membrane protein</topology>
    </subcellularLocation>
</comment>
<comment type="similarity">
    <text evidence="4">Belongs to the complex I subunit 4L family.</text>
</comment>
<name>NU4LM_LIPVE</name>
<proteinExistence type="inferred from homology"/>
<protein>
    <recommendedName>
        <fullName>NADH-ubiquinone oxidoreductase chain 4L</fullName>
        <ecNumber>7.1.1.2</ecNumber>
    </recommendedName>
    <alternativeName>
        <fullName>NADH dehydrogenase subunit 4L</fullName>
    </alternativeName>
</protein>
<organism>
    <name type="scientific">Lipotes vexillifer</name>
    <name type="common">Yangtze river dolphin</name>
    <dbReference type="NCBI Taxonomy" id="118797"/>
    <lineage>
        <taxon>Eukaryota</taxon>
        <taxon>Metazoa</taxon>
        <taxon>Chordata</taxon>
        <taxon>Craniata</taxon>
        <taxon>Vertebrata</taxon>
        <taxon>Euteleostomi</taxon>
        <taxon>Mammalia</taxon>
        <taxon>Eutheria</taxon>
        <taxon>Laurasiatheria</taxon>
        <taxon>Artiodactyla</taxon>
        <taxon>Whippomorpha</taxon>
        <taxon>Cetacea</taxon>
        <taxon>Odontoceti</taxon>
        <taxon>Lipotidae</taxon>
        <taxon>Lipotes</taxon>
    </lineage>
</organism>
<reference key="1">
    <citation type="journal article" date="2005" name="Mol. Phylogenet. Evol.">
        <title>Molecular phylogenetics of 'river dolphins' and the baiji mitochondrial genome.</title>
        <authorList>
            <person name="Yan J."/>
            <person name="Zhou K."/>
            <person name="Yang G."/>
        </authorList>
    </citation>
    <scope>NUCLEOTIDE SEQUENCE [GENOMIC DNA]</scope>
</reference>
<evidence type="ECO:0000250" key="1">
    <source>
        <dbReference type="UniProtKB" id="P03901"/>
    </source>
</evidence>
<evidence type="ECO:0000250" key="2">
    <source>
        <dbReference type="UniProtKB" id="P03902"/>
    </source>
</evidence>
<evidence type="ECO:0000255" key="3"/>
<evidence type="ECO:0000305" key="4"/>
<feature type="chain" id="PRO_0000275043" description="NADH-ubiquinone oxidoreductase chain 4L">
    <location>
        <begin position="1"/>
        <end position="98"/>
    </location>
</feature>
<feature type="transmembrane region" description="Helical" evidence="3">
    <location>
        <begin position="1"/>
        <end position="21"/>
    </location>
</feature>
<feature type="transmembrane region" description="Helical" evidence="3">
    <location>
        <begin position="29"/>
        <end position="49"/>
    </location>
</feature>
<feature type="transmembrane region" description="Helical" evidence="3">
    <location>
        <begin position="59"/>
        <end position="79"/>
    </location>
</feature>